<name>KDSA_PECCP</name>
<keyword id="KW-0963">Cytoplasm</keyword>
<keyword id="KW-0448">Lipopolysaccharide biosynthesis</keyword>
<keyword id="KW-0808">Transferase</keyword>
<proteinExistence type="inferred from homology"/>
<gene>
    <name evidence="1" type="primary">kdsA</name>
    <name type="ordered locus">PC1_2110</name>
</gene>
<protein>
    <recommendedName>
        <fullName evidence="1">2-dehydro-3-deoxyphosphooctonate aldolase</fullName>
        <ecNumber evidence="1">2.5.1.55</ecNumber>
    </recommendedName>
    <alternativeName>
        <fullName evidence="1">3-deoxy-D-manno-octulosonic acid 8-phosphate synthase</fullName>
    </alternativeName>
    <alternativeName>
        <fullName evidence="1">KDO-8-phosphate synthase</fullName>
        <shortName evidence="1">KDO 8-P synthase</shortName>
        <shortName evidence="1">KDOPS</shortName>
    </alternativeName>
    <alternativeName>
        <fullName evidence="1">Phospho-2-dehydro-3-deoxyoctonate aldolase</fullName>
    </alternativeName>
</protein>
<comment type="catalytic activity">
    <reaction evidence="1">
        <text>D-arabinose 5-phosphate + phosphoenolpyruvate + H2O = 3-deoxy-alpha-D-manno-2-octulosonate-8-phosphate + phosphate</text>
        <dbReference type="Rhea" id="RHEA:14053"/>
        <dbReference type="ChEBI" id="CHEBI:15377"/>
        <dbReference type="ChEBI" id="CHEBI:43474"/>
        <dbReference type="ChEBI" id="CHEBI:57693"/>
        <dbReference type="ChEBI" id="CHEBI:58702"/>
        <dbReference type="ChEBI" id="CHEBI:85985"/>
        <dbReference type="EC" id="2.5.1.55"/>
    </reaction>
</comment>
<comment type="pathway">
    <text evidence="1">Carbohydrate biosynthesis; 3-deoxy-D-manno-octulosonate biosynthesis; 3-deoxy-D-manno-octulosonate from D-ribulose 5-phosphate: step 2/3.</text>
</comment>
<comment type="pathway">
    <text evidence="1">Bacterial outer membrane biogenesis; lipopolysaccharide biosynthesis.</text>
</comment>
<comment type="subcellular location">
    <subcellularLocation>
        <location evidence="1">Cytoplasm</location>
    </subcellularLocation>
</comment>
<comment type="similarity">
    <text evidence="1">Belongs to the KdsA family.</text>
</comment>
<sequence length="284" mass="30914">MTNKVVKIGDIPVANDLPFVLFGGMNVLESRDLAMRICEHYVTITQKLSIPYVFKASFDKANRSSIHSYRGPGLEEGMKIFQELKQTFGVKIITDVHEAHQAQPVADVVDVIQLPAFLARQTDLVEAMAKTGAVINVKKPQFVSPGQMGNIVDKFIEGGNDQVILCDRGSNFGYDNLVVDMLGFNVMKQVSKGSPVIFDVTHALQCRDPFGAASSGRRGQVTELARAGMAVGLAGLFIEAHPDPANAKCDGPSALPLDKLEPFLQQIKAIDDLVKNFPELDTSK</sequence>
<organism>
    <name type="scientific">Pectobacterium carotovorum subsp. carotovorum (strain PC1)</name>
    <dbReference type="NCBI Taxonomy" id="561230"/>
    <lineage>
        <taxon>Bacteria</taxon>
        <taxon>Pseudomonadati</taxon>
        <taxon>Pseudomonadota</taxon>
        <taxon>Gammaproteobacteria</taxon>
        <taxon>Enterobacterales</taxon>
        <taxon>Pectobacteriaceae</taxon>
        <taxon>Pectobacterium</taxon>
    </lineage>
</organism>
<feature type="chain" id="PRO_1000202335" description="2-dehydro-3-deoxyphosphooctonate aldolase">
    <location>
        <begin position="1"/>
        <end position="284"/>
    </location>
</feature>
<evidence type="ECO:0000255" key="1">
    <source>
        <dbReference type="HAMAP-Rule" id="MF_00056"/>
    </source>
</evidence>
<reference key="1">
    <citation type="submission" date="2009-07" db="EMBL/GenBank/DDBJ databases">
        <title>Complete sequence of Pectobacterium carotovorum subsp. carotovorum PC1.</title>
        <authorList>
            <consortium name="US DOE Joint Genome Institute"/>
            <person name="Lucas S."/>
            <person name="Copeland A."/>
            <person name="Lapidus A."/>
            <person name="Glavina del Rio T."/>
            <person name="Tice H."/>
            <person name="Bruce D."/>
            <person name="Goodwin L."/>
            <person name="Pitluck S."/>
            <person name="Munk A.C."/>
            <person name="Brettin T."/>
            <person name="Detter J.C."/>
            <person name="Han C."/>
            <person name="Tapia R."/>
            <person name="Larimer F."/>
            <person name="Land M."/>
            <person name="Hauser L."/>
            <person name="Kyrpides N."/>
            <person name="Mikhailova N."/>
            <person name="Balakrishnan V."/>
            <person name="Glasner J."/>
            <person name="Perna N.T."/>
        </authorList>
    </citation>
    <scope>NUCLEOTIDE SEQUENCE [LARGE SCALE GENOMIC DNA]</scope>
    <source>
        <strain>PC1</strain>
    </source>
</reference>
<dbReference type="EC" id="2.5.1.55" evidence="1"/>
<dbReference type="EMBL" id="CP001657">
    <property type="protein sequence ID" value="ACT13150.1"/>
    <property type="molecule type" value="Genomic_DNA"/>
</dbReference>
<dbReference type="RefSeq" id="WP_015840341.1">
    <property type="nucleotide sequence ID" value="NC_012917.1"/>
</dbReference>
<dbReference type="SMR" id="C6DHX7"/>
<dbReference type="STRING" id="561230.PC1_2110"/>
<dbReference type="KEGG" id="pct:PC1_2110"/>
<dbReference type="eggNOG" id="COG2877">
    <property type="taxonomic scope" value="Bacteria"/>
</dbReference>
<dbReference type="HOGENOM" id="CLU_036666_0_0_6"/>
<dbReference type="OrthoDB" id="9776934at2"/>
<dbReference type="UniPathway" id="UPA00030"/>
<dbReference type="UniPathway" id="UPA00357">
    <property type="reaction ID" value="UER00474"/>
</dbReference>
<dbReference type="Proteomes" id="UP000002736">
    <property type="component" value="Chromosome"/>
</dbReference>
<dbReference type="GO" id="GO:0005737">
    <property type="term" value="C:cytoplasm"/>
    <property type="evidence" value="ECO:0007669"/>
    <property type="project" value="UniProtKB-SubCell"/>
</dbReference>
<dbReference type="GO" id="GO:0008676">
    <property type="term" value="F:3-deoxy-8-phosphooctulonate synthase activity"/>
    <property type="evidence" value="ECO:0007669"/>
    <property type="project" value="UniProtKB-UniRule"/>
</dbReference>
<dbReference type="GO" id="GO:0019294">
    <property type="term" value="P:keto-3-deoxy-D-manno-octulosonic acid biosynthetic process"/>
    <property type="evidence" value="ECO:0007669"/>
    <property type="project" value="UniProtKB-UniRule"/>
</dbReference>
<dbReference type="FunFam" id="3.20.20.70:FF:000058">
    <property type="entry name" value="2-dehydro-3-deoxyphosphooctonate aldolase"/>
    <property type="match status" value="1"/>
</dbReference>
<dbReference type="Gene3D" id="3.20.20.70">
    <property type="entry name" value="Aldolase class I"/>
    <property type="match status" value="1"/>
</dbReference>
<dbReference type="HAMAP" id="MF_00056">
    <property type="entry name" value="KDO8P_synth"/>
    <property type="match status" value="1"/>
</dbReference>
<dbReference type="InterPro" id="IPR013785">
    <property type="entry name" value="Aldolase_TIM"/>
</dbReference>
<dbReference type="InterPro" id="IPR006218">
    <property type="entry name" value="DAHP1/KDSA"/>
</dbReference>
<dbReference type="InterPro" id="IPR006269">
    <property type="entry name" value="KDO8P_synthase"/>
</dbReference>
<dbReference type="NCBIfam" id="TIGR01362">
    <property type="entry name" value="KDO8P_synth"/>
    <property type="match status" value="1"/>
</dbReference>
<dbReference type="NCBIfam" id="NF003543">
    <property type="entry name" value="PRK05198.1"/>
    <property type="match status" value="1"/>
</dbReference>
<dbReference type="NCBIfam" id="NF009109">
    <property type="entry name" value="PRK12457.1"/>
    <property type="match status" value="1"/>
</dbReference>
<dbReference type="PANTHER" id="PTHR21057">
    <property type="entry name" value="PHOSPHO-2-DEHYDRO-3-DEOXYHEPTONATE ALDOLASE"/>
    <property type="match status" value="1"/>
</dbReference>
<dbReference type="Pfam" id="PF00793">
    <property type="entry name" value="DAHP_synth_1"/>
    <property type="match status" value="1"/>
</dbReference>
<dbReference type="SUPFAM" id="SSF51569">
    <property type="entry name" value="Aldolase"/>
    <property type="match status" value="1"/>
</dbReference>
<accession>C6DHX7</accession>